<feature type="chain" id="PRO_0000116143" description="Protein US8.5">
    <location>
        <begin position="1"/>
        <end position="159"/>
    </location>
</feature>
<feature type="region of interest" description="Disordered" evidence="1">
    <location>
        <begin position="27"/>
        <end position="107"/>
    </location>
</feature>
<feature type="compositionally biased region" description="Basic and acidic residues" evidence="1">
    <location>
        <begin position="80"/>
        <end position="91"/>
    </location>
</feature>
<feature type="sequence variant" description="In strain: Nonneuroinvasive mutant HF10.">
    <original>E</original>
    <variation>K</variation>
    <location>
        <position position="82"/>
    </location>
</feature>
<feature type="sequence variant" description="In strain: Nonneuroinvasive mutant HF10.">
    <original>T</original>
    <variation>M</variation>
    <location>
        <position position="109"/>
    </location>
</feature>
<feature type="sequence variant" description="In strain: Nonneuroinvasive mutant HF10.">
    <original>A</original>
    <variation>T</variation>
    <location>
        <position position="122"/>
    </location>
</feature>
<feature type="sequence variant" description="In strain: Nonneuroinvasive mutant HF10.">
    <original>A</original>
    <variation>V</variation>
    <location>
        <position position="149"/>
    </location>
</feature>
<organism>
    <name type="scientific">Human herpesvirus 1 (strain 17)</name>
    <name type="common">HHV-1</name>
    <name type="synonym">Human herpes simplex virus 1</name>
    <dbReference type="NCBI Taxonomy" id="10299"/>
    <lineage>
        <taxon>Viruses</taxon>
        <taxon>Duplodnaviria</taxon>
        <taxon>Heunggongvirae</taxon>
        <taxon>Peploviricota</taxon>
        <taxon>Herviviricetes</taxon>
        <taxon>Herpesvirales</taxon>
        <taxon>Orthoherpesviridae</taxon>
        <taxon>Alphaherpesvirinae</taxon>
        <taxon>Simplexvirus</taxon>
        <taxon>Simplexvirus humanalpha1</taxon>
        <taxon>Human herpesvirus 1</taxon>
    </lineage>
</organism>
<gene>
    <name type="ORF">US8.5</name>
</gene>
<dbReference type="EMBL" id="X14112">
    <property type="protein sequence ID" value="CAA32273.1"/>
    <property type="molecule type" value="Genomic_DNA"/>
</dbReference>
<dbReference type="EMBL" id="DQ889502">
    <property type="protein sequence ID" value="ABI63527.1"/>
    <property type="molecule type" value="Genomic_DNA"/>
</dbReference>
<dbReference type="EMBL" id="FJ593289">
    <property type="protein sequence ID" value="ACM62298.1"/>
    <property type="molecule type" value="Genomic_DNA"/>
</dbReference>
<dbReference type="SMR" id="O09802"/>
<dbReference type="iPTMnet" id="O09802"/>
<dbReference type="KEGG" id="vg:2703450"/>
<dbReference type="Proteomes" id="UP000009294">
    <property type="component" value="Segment"/>
</dbReference>
<dbReference type="Proteomes" id="UP000180652">
    <property type="component" value="Segment"/>
</dbReference>
<dbReference type="GO" id="GO:0044196">
    <property type="term" value="C:host cell nucleolus"/>
    <property type="evidence" value="ECO:0007669"/>
    <property type="project" value="UniProtKB-SubCell"/>
</dbReference>
<dbReference type="InterPro" id="IPR017377">
    <property type="entry name" value="Herpes_US8A"/>
</dbReference>
<dbReference type="PIRSF" id="PIRSF038076">
    <property type="entry name" value="US8A"/>
    <property type="match status" value="1"/>
</dbReference>
<proteinExistence type="evidence at protein level"/>
<name>US8A_HHV11</name>
<reference key="1">
    <citation type="journal article" date="1985" name="J. Mol. Biol.">
        <title>Sequence determination and genetic content of the short unique region in the genome of herpes simplex virus type 1.</title>
        <authorList>
            <person name="McGeoch D.J."/>
            <person name="Dolan A."/>
            <person name="Donald S."/>
            <person name="Rixon F.J."/>
        </authorList>
    </citation>
    <scope>NUCLEOTIDE SEQUENCE [LARGE SCALE GENOMIC DNA]</scope>
</reference>
<reference key="2">
    <citation type="journal article" date="1988" name="J. Gen. Virol.">
        <title>The complete DNA sequence of the long unique region in the genome of herpes simplex virus type 1.</title>
        <authorList>
            <person name="McGeoch D.J."/>
            <person name="Dalrymple M.A."/>
            <person name="Davison A.J."/>
            <person name="Dolan A."/>
            <person name="Frame M.C."/>
            <person name="McNab D."/>
            <person name="Perry L.J."/>
            <person name="Scott J.E."/>
            <person name="Taylor P."/>
        </authorList>
    </citation>
    <scope>NUCLEOTIDE SEQUENCE [GENOMIC DNA]</scope>
</reference>
<reference key="3">
    <citation type="journal article" date="1998" name="J. Virol.">
        <title>The genome sequence of herpes simplex virus type 2.</title>
        <authorList>
            <person name="Dolan A."/>
            <person name="Jamieson F.E."/>
            <person name="Cunningham C."/>
            <person name="Barnett B.C."/>
            <person name="McGeoch D.J."/>
        </authorList>
    </citation>
    <scope>SEQUENCE REVISION</scope>
</reference>
<reference key="4">
    <citation type="journal article" date="2007" name="Microbes Infect.">
        <title>Determination and analysis of the DNA sequence of highly attenuated herpes simplex virus type 1 mutant HF10, a potential oncolytic virus.</title>
        <authorList>
            <person name="Ushijima Y."/>
            <person name="Luo C."/>
            <person name="Goshima F."/>
            <person name="Yamauchi Y."/>
            <person name="Kimura H."/>
            <person name="Nishiyama Y."/>
        </authorList>
    </citation>
    <scope>NUCLEOTIDE SEQUENCE [LARGE SCALE GENOMIC DNA]</scope>
    <source>
        <strain>Nonneuroinvasive mutant HF10</strain>
    </source>
</reference>
<reference key="5">
    <citation type="submission" date="2008-12" db="EMBL/GenBank/DDBJ databases">
        <title>Herpes simplex virus type 1 bacterial artificial chromosome.</title>
        <authorList>
            <person name="Cunningham C."/>
            <person name="Davison A.J."/>
        </authorList>
    </citation>
    <scope>NUCLEOTIDE SEQUENCE [LARGE SCALE GENOMIC DNA]</scope>
    <source>
        <strain>17 syn+</strain>
    </source>
</reference>
<reference key="6">
    <citation type="journal article" date="1995" name="Arch. Virol.">
        <title>Characterization of the US8.5 protein of herpes simplex virus.</title>
        <authorList>
            <person name="Georgopoulou U."/>
            <person name="Kakkanas A."/>
            <person name="Miriagou V."/>
            <person name="Michaelidou A."/>
            <person name="Mavromara P."/>
        </authorList>
    </citation>
    <scope>PHOSPHORYLATION</scope>
    <scope>SUBCELLULAR LOCATION</scope>
</reference>
<protein>
    <recommendedName>
        <fullName>Protein US8.5</fullName>
    </recommendedName>
</protein>
<evidence type="ECO:0000256" key="1">
    <source>
        <dbReference type="SAM" id="MobiDB-lite"/>
    </source>
</evidence>
<evidence type="ECO:0000269" key="2">
    <source>
    </source>
</evidence>
<evidence type="ECO:0000305" key="3"/>
<comment type="subcellular location">
    <subcellularLocation>
        <location evidence="2">Host nucleus</location>
        <location evidence="2">Host nucleolus</location>
    </subcellularLocation>
</comment>
<comment type="PTM">
    <text evidence="2">Phosphorylated.</text>
</comment>
<comment type="similarity">
    <text evidence="3">Belongs to the HHV-1 US8.5 protein family.</text>
</comment>
<sequence length="159" mass="16802">MDPALRSYHQRLRLYTPVAMGINLAASSQPLDPEGPIAVTPRPPIRPSSGKAPHPEAPRRSPNWATAGEVDVGDELIAISDERGPPRHDRPPLATSTAPSPHPRPPGYTAVVSPMALQAVDAPSLFVAWLAARWLRGASGLGAVLCGIAWYVTSIARGA</sequence>
<keyword id="KW-1048">Host nucleus</keyword>
<keyword id="KW-0597">Phosphoprotein</keyword>
<keyword id="KW-1185">Reference proteome</keyword>
<organismHost>
    <name type="scientific">Homo sapiens</name>
    <name type="common">Human</name>
    <dbReference type="NCBI Taxonomy" id="9606"/>
</organismHost>
<accession>O09802</accession>
<accession>B9VQK3</accession>
<accession>Q09I68</accession>